<gene>
    <name evidence="1" type="primary">rplA</name>
    <name type="ordered locus">BMEI0746</name>
</gene>
<reference key="1">
    <citation type="journal article" date="2002" name="Proc. Natl. Acad. Sci. U.S.A.">
        <title>The genome sequence of the facultative intracellular pathogen Brucella melitensis.</title>
        <authorList>
            <person name="DelVecchio V.G."/>
            <person name="Kapatral V."/>
            <person name="Redkar R.J."/>
            <person name="Patra G."/>
            <person name="Mujer C."/>
            <person name="Los T."/>
            <person name="Ivanova N."/>
            <person name="Anderson I."/>
            <person name="Bhattacharyya A."/>
            <person name="Lykidis A."/>
            <person name="Reznik G."/>
            <person name="Jablonski L."/>
            <person name="Larsen N."/>
            <person name="D'Souza M."/>
            <person name="Bernal A."/>
            <person name="Mazur M."/>
            <person name="Goltsman E."/>
            <person name="Selkov E."/>
            <person name="Elzer P.H."/>
            <person name="Hagius S."/>
            <person name="O'Callaghan D."/>
            <person name="Letesson J.-J."/>
            <person name="Haselkorn R."/>
            <person name="Kyrpides N.C."/>
            <person name="Overbeek R."/>
        </authorList>
    </citation>
    <scope>NUCLEOTIDE SEQUENCE [LARGE SCALE GENOMIC DNA]</scope>
    <source>
        <strain>ATCC 23456 / CCUG 17765 / NCTC 10094 / 16M</strain>
    </source>
</reference>
<accession>Q8YHQ0</accession>
<proteinExistence type="inferred from homology"/>
<dbReference type="EMBL" id="AE008917">
    <property type="protein sequence ID" value="AAL51927.1"/>
    <property type="molecule type" value="Genomic_DNA"/>
</dbReference>
<dbReference type="PIR" id="AD3345">
    <property type="entry name" value="AD3345"/>
</dbReference>
<dbReference type="RefSeq" id="WP_004683931.1">
    <property type="nucleotide sequence ID" value="NZ_GG703780.1"/>
</dbReference>
<dbReference type="SMR" id="Q8YHQ0"/>
<dbReference type="GeneID" id="29593561"/>
<dbReference type="KEGG" id="bme:BMEI0746"/>
<dbReference type="KEGG" id="bmel:DK63_676"/>
<dbReference type="PATRIC" id="fig|224914.52.peg.707"/>
<dbReference type="eggNOG" id="COG0081">
    <property type="taxonomic scope" value="Bacteria"/>
</dbReference>
<dbReference type="PhylomeDB" id="Q8YHQ0"/>
<dbReference type="Proteomes" id="UP000000419">
    <property type="component" value="Chromosome I"/>
</dbReference>
<dbReference type="GO" id="GO:0022625">
    <property type="term" value="C:cytosolic large ribosomal subunit"/>
    <property type="evidence" value="ECO:0007669"/>
    <property type="project" value="TreeGrafter"/>
</dbReference>
<dbReference type="GO" id="GO:0019843">
    <property type="term" value="F:rRNA binding"/>
    <property type="evidence" value="ECO:0007669"/>
    <property type="project" value="UniProtKB-UniRule"/>
</dbReference>
<dbReference type="GO" id="GO:0003735">
    <property type="term" value="F:structural constituent of ribosome"/>
    <property type="evidence" value="ECO:0007669"/>
    <property type="project" value="InterPro"/>
</dbReference>
<dbReference type="GO" id="GO:0000049">
    <property type="term" value="F:tRNA binding"/>
    <property type="evidence" value="ECO:0007669"/>
    <property type="project" value="UniProtKB-KW"/>
</dbReference>
<dbReference type="GO" id="GO:0006417">
    <property type="term" value="P:regulation of translation"/>
    <property type="evidence" value="ECO:0007669"/>
    <property type="project" value="UniProtKB-KW"/>
</dbReference>
<dbReference type="GO" id="GO:0006412">
    <property type="term" value="P:translation"/>
    <property type="evidence" value="ECO:0007669"/>
    <property type="project" value="UniProtKB-UniRule"/>
</dbReference>
<dbReference type="CDD" id="cd00403">
    <property type="entry name" value="Ribosomal_L1"/>
    <property type="match status" value="1"/>
</dbReference>
<dbReference type="FunFam" id="3.40.50.790:FF:000001">
    <property type="entry name" value="50S ribosomal protein L1"/>
    <property type="match status" value="1"/>
</dbReference>
<dbReference type="Gene3D" id="3.30.190.20">
    <property type="match status" value="1"/>
</dbReference>
<dbReference type="Gene3D" id="3.40.50.790">
    <property type="match status" value="1"/>
</dbReference>
<dbReference type="HAMAP" id="MF_01318_B">
    <property type="entry name" value="Ribosomal_uL1_B"/>
    <property type="match status" value="1"/>
</dbReference>
<dbReference type="InterPro" id="IPR005878">
    <property type="entry name" value="Ribosom_uL1_bac-type"/>
</dbReference>
<dbReference type="InterPro" id="IPR002143">
    <property type="entry name" value="Ribosomal_uL1"/>
</dbReference>
<dbReference type="InterPro" id="IPR023674">
    <property type="entry name" value="Ribosomal_uL1-like"/>
</dbReference>
<dbReference type="InterPro" id="IPR028364">
    <property type="entry name" value="Ribosomal_uL1/biogenesis"/>
</dbReference>
<dbReference type="InterPro" id="IPR016095">
    <property type="entry name" value="Ribosomal_uL1_3-a/b-sand"/>
</dbReference>
<dbReference type="InterPro" id="IPR023673">
    <property type="entry name" value="Ribosomal_uL1_CS"/>
</dbReference>
<dbReference type="NCBIfam" id="TIGR01169">
    <property type="entry name" value="rplA_bact"/>
    <property type="match status" value="1"/>
</dbReference>
<dbReference type="PANTHER" id="PTHR36427">
    <property type="entry name" value="54S RIBOSOMAL PROTEIN L1, MITOCHONDRIAL"/>
    <property type="match status" value="1"/>
</dbReference>
<dbReference type="PANTHER" id="PTHR36427:SF3">
    <property type="entry name" value="LARGE RIBOSOMAL SUBUNIT PROTEIN UL1M"/>
    <property type="match status" value="1"/>
</dbReference>
<dbReference type="Pfam" id="PF00687">
    <property type="entry name" value="Ribosomal_L1"/>
    <property type="match status" value="1"/>
</dbReference>
<dbReference type="PIRSF" id="PIRSF002155">
    <property type="entry name" value="Ribosomal_L1"/>
    <property type="match status" value="1"/>
</dbReference>
<dbReference type="SUPFAM" id="SSF56808">
    <property type="entry name" value="Ribosomal protein L1"/>
    <property type="match status" value="1"/>
</dbReference>
<dbReference type="PROSITE" id="PS01199">
    <property type="entry name" value="RIBOSOMAL_L1"/>
    <property type="match status" value="1"/>
</dbReference>
<sequence>MAKISKRINKIHEGVDRNKLYDLSAAIGLVKERAVAKFDETVEIAMNLGVDPRHADQMVRGVVNLPNGTGRTVRVAVFARGDKAEEAKKAGADIVGAEELFEIVNGGKIEFDRCIATPDMMPLVGRLGKVLGPRGMMPNPKVGTVTTDVAAAVAASKGGAVEFRVEKAGIIHAGIGKVSFDNAKLEENIKAFADAVIKAKPSAAKGEYVKRVSISSTMGVGVKVDPSTVKVVD</sequence>
<name>RL1_BRUME</name>
<organism>
    <name type="scientific">Brucella melitensis biotype 1 (strain ATCC 23456 / CCUG 17765 / NCTC 10094 / 16M)</name>
    <dbReference type="NCBI Taxonomy" id="224914"/>
    <lineage>
        <taxon>Bacteria</taxon>
        <taxon>Pseudomonadati</taxon>
        <taxon>Pseudomonadota</taxon>
        <taxon>Alphaproteobacteria</taxon>
        <taxon>Hyphomicrobiales</taxon>
        <taxon>Brucellaceae</taxon>
        <taxon>Brucella/Ochrobactrum group</taxon>
        <taxon>Brucella</taxon>
    </lineage>
</organism>
<evidence type="ECO:0000255" key="1">
    <source>
        <dbReference type="HAMAP-Rule" id="MF_01318"/>
    </source>
</evidence>
<evidence type="ECO:0000305" key="2"/>
<keyword id="KW-0678">Repressor</keyword>
<keyword id="KW-0687">Ribonucleoprotein</keyword>
<keyword id="KW-0689">Ribosomal protein</keyword>
<keyword id="KW-0694">RNA-binding</keyword>
<keyword id="KW-0699">rRNA-binding</keyword>
<keyword id="KW-0810">Translation regulation</keyword>
<keyword id="KW-0820">tRNA-binding</keyword>
<protein>
    <recommendedName>
        <fullName evidence="1">Large ribosomal subunit protein uL1</fullName>
    </recommendedName>
    <alternativeName>
        <fullName evidence="2">50S ribosomal protein L1</fullName>
    </alternativeName>
</protein>
<comment type="function">
    <text evidence="1">Binds directly to 23S rRNA. The L1 stalk is quite mobile in the ribosome, and is involved in E site tRNA release.</text>
</comment>
<comment type="function">
    <text evidence="1">Protein L1 is also a translational repressor protein, it controls the translation of the L11 operon by binding to its mRNA.</text>
</comment>
<comment type="subunit">
    <text evidence="1">Part of the 50S ribosomal subunit.</text>
</comment>
<comment type="similarity">
    <text evidence="1">Belongs to the universal ribosomal protein uL1 family.</text>
</comment>
<feature type="chain" id="PRO_0000125628" description="Large ribosomal subunit protein uL1">
    <location>
        <begin position="1"/>
        <end position="233"/>
    </location>
</feature>